<proteinExistence type="inferred from homology"/>
<feature type="chain" id="PRO_1000204683" description="Cell division topological specificity factor">
    <location>
        <begin position="1"/>
        <end position="94"/>
    </location>
</feature>
<organism>
    <name type="scientific">Hamiltonella defensa subsp. Acyrthosiphon pisum (strain 5AT)</name>
    <dbReference type="NCBI Taxonomy" id="572265"/>
    <lineage>
        <taxon>Bacteria</taxon>
        <taxon>Pseudomonadati</taxon>
        <taxon>Pseudomonadota</taxon>
        <taxon>Gammaproteobacteria</taxon>
        <taxon>Enterobacterales</taxon>
        <taxon>Enterobacteriaceae</taxon>
        <taxon>aphid secondary symbionts</taxon>
        <taxon>Candidatus Hamiltonella</taxon>
    </lineage>
</organism>
<keyword id="KW-0131">Cell cycle</keyword>
<keyword id="KW-0132">Cell division</keyword>
<comment type="function">
    <text evidence="1">Prevents the cell division inhibition by proteins MinC and MinD at internal division sites while permitting inhibition at polar sites. This ensures cell division at the proper site by restricting the formation of a division septum at the midpoint of the long axis of the cell.</text>
</comment>
<comment type="similarity">
    <text evidence="1">Belongs to the MinE family.</text>
</comment>
<sequence length="94" mass="10763">MGFFDFFSPDKKNSAANIAKDRLQIIVRERRCCDRDPLYLSDMKRDILAVICKYVQLDPNALHVQFEQKEDDVSVLELNVILPEVSSTGDCSKP</sequence>
<accession>C4K838</accession>
<dbReference type="EMBL" id="CP001277">
    <property type="protein sequence ID" value="ACQ66798.1"/>
    <property type="molecule type" value="Genomic_DNA"/>
</dbReference>
<dbReference type="RefSeq" id="WP_012737763.1">
    <property type="nucleotide sequence ID" value="NC_012751.1"/>
</dbReference>
<dbReference type="SMR" id="C4K838"/>
<dbReference type="STRING" id="572265.HDEF_0022"/>
<dbReference type="GeneID" id="66259966"/>
<dbReference type="KEGG" id="hde:HDEF_0022"/>
<dbReference type="eggNOG" id="COG0851">
    <property type="taxonomic scope" value="Bacteria"/>
</dbReference>
<dbReference type="HOGENOM" id="CLU_137929_2_2_6"/>
<dbReference type="Proteomes" id="UP000002334">
    <property type="component" value="Chromosome"/>
</dbReference>
<dbReference type="GO" id="GO:0051301">
    <property type="term" value="P:cell division"/>
    <property type="evidence" value="ECO:0007669"/>
    <property type="project" value="UniProtKB-KW"/>
</dbReference>
<dbReference type="GO" id="GO:0032955">
    <property type="term" value="P:regulation of division septum assembly"/>
    <property type="evidence" value="ECO:0007669"/>
    <property type="project" value="InterPro"/>
</dbReference>
<dbReference type="FunFam" id="3.30.1070.10:FF:000001">
    <property type="entry name" value="Cell division topological specificity factor"/>
    <property type="match status" value="1"/>
</dbReference>
<dbReference type="Gene3D" id="3.30.1070.10">
    <property type="entry name" value="Cell division topological specificity factor MinE"/>
    <property type="match status" value="1"/>
</dbReference>
<dbReference type="HAMAP" id="MF_00262">
    <property type="entry name" value="MinE"/>
    <property type="match status" value="1"/>
</dbReference>
<dbReference type="InterPro" id="IPR005527">
    <property type="entry name" value="MinE"/>
</dbReference>
<dbReference type="InterPro" id="IPR036707">
    <property type="entry name" value="MinE_sf"/>
</dbReference>
<dbReference type="NCBIfam" id="TIGR01215">
    <property type="entry name" value="minE"/>
    <property type="match status" value="1"/>
</dbReference>
<dbReference type="NCBIfam" id="NF001422">
    <property type="entry name" value="PRK00296.1"/>
    <property type="match status" value="1"/>
</dbReference>
<dbReference type="Pfam" id="PF03776">
    <property type="entry name" value="MinE"/>
    <property type="match status" value="1"/>
</dbReference>
<dbReference type="SUPFAM" id="SSF55229">
    <property type="entry name" value="Cell division protein MinE topological specificity domain"/>
    <property type="match status" value="1"/>
</dbReference>
<protein>
    <recommendedName>
        <fullName evidence="1">Cell division topological specificity factor</fullName>
    </recommendedName>
</protein>
<evidence type="ECO:0000255" key="1">
    <source>
        <dbReference type="HAMAP-Rule" id="MF_00262"/>
    </source>
</evidence>
<reference key="1">
    <citation type="journal article" date="2009" name="Proc. Natl. Acad. Sci. U.S.A.">
        <title>Hamiltonella defensa, genome evolution of protective bacterial endosymbiont from pathogenic ancestors.</title>
        <authorList>
            <person name="Degnan P.H."/>
            <person name="Yu Y."/>
            <person name="Sisneros N."/>
            <person name="Wing R.A."/>
            <person name="Moran N.A."/>
        </authorList>
    </citation>
    <scope>NUCLEOTIDE SEQUENCE [LARGE SCALE GENOMIC DNA]</scope>
    <source>
        <strain>5AT</strain>
    </source>
</reference>
<gene>
    <name evidence="1" type="primary">minE</name>
    <name type="ordered locus">HDEF_0022</name>
</gene>
<name>MINE_HAMD5</name>